<proteinExistence type="inferred from homology"/>
<sequence>MSLSDQVLAVNDDLPIRTDKPVHSGKVRSVYWLTEEDSRRLIKEKGYNVAPDAPLAIMVISDRISAFDCIWHGEGDLKGIPGKGAALNAISNHWFQLFKDNGLADSHILDIPHPFVWIVQKAKPVMIEAICRQYITGSMWRAYTQGEREFCGITLPERLEKDEQLAELLLTPSTKGILKGIDGVPEVDDVNITRKNIEDNYDKFNFSCIEDIATYEKLLKEGFAVIAKALNKIDQIFVDTKFEFGYVEDAQGNEKLIYMDEVGTPDSSRIWDTKAYRSGHIIENSKEGFRQFLLNHFPEPDILLNKNRMEERFALAEENALPLEAMMDLSKTYLDIAAKITGAPITLSDNPKAEIIKVLKEEYQLVD</sequence>
<evidence type="ECO:0000255" key="1">
    <source>
        <dbReference type="HAMAP-Rule" id="MF_00137"/>
    </source>
</evidence>
<gene>
    <name evidence="1" type="primary">purC</name>
    <name type="ordered locus">VF_1498</name>
</gene>
<dbReference type="EC" id="6.3.2.6" evidence="1"/>
<dbReference type="EMBL" id="CP000020">
    <property type="protein sequence ID" value="AAW85993.1"/>
    <property type="molecule type" value="Genomic_DNA"/>
</dbReference>
<dbReference type="RefSeq" id="WP_011262080.1">
    <property type="nucleotide sequence ID" value="NC_006840.2"/>
</dbReference>
<dbReference type="RefSeq" id="YP_204881.1">
    <property type="nucleotide sequence ID" value="NC_006840.2"/>
</dbReference>
<dbReference type="SMR" id="Q5E4Q3"/>
<dbReference type="STRING" id="312309.VF_1498"/>
<dbReference type="EnsemblBacteria" id="AAW85993">
    <property type="protein sequence ID" value="AAW85993"/>
    <property type="gene ID" value="VF_1498"/>
</dbReference>
<dbReference type="GeneID" id="54164171"/>
<dbReference type="KEGG" id="vfi:VF_1498"/>
<dbReference type="PATRIC" id="fig|312309.11.peg.1515"/>
<dbReference type="eggNOG" id="COG0152">
    <property type="taxonomic scope" value="Bacteria"/>
</dbReference>
<dbReference type="HOGENOM" id="CLU_064197_0_0_6"/>
<dbReference type="OrthoDB" id="9801549at2"/>
<dbReference type="UniPathway" id="UPA00074">
    <property type="reaction ID" value="UER00131"/>
</dbReference>
<dbReference type="Proteomes" id="UP000000537">
    <property type="component" value="Chromosome I"/>
</dbReference>
<dbReference type="GO" id="GO:0005737">
    <property type="term" value="C:cytoplasm"/>
    <property type="evidence" value="ECO:0007669"/>
    <property type="project" value="TreeGrafter"/>
</dbReference>
<dbReference type="GO" id="GO:0005524">
    <property type="term" value="F:ATP binding"/>
    <property type="evidence" value="ECO:0007669"/>
    <property type="project" value="UniProtKB-KW"/>
</dbReference>
<dbReference type="GO" id="GO:0004639">
    <property type="term" value="F:phosphoribosylaminoimidazolesuccinocarboxamide synthase activity"/>
    <property type="evidence" value="ECO:0007669"/>
    <property type="project" value="UniProtKB-UniRule"/>
</dbReference>
<dbReference type="GO" id="GO:0006189">
    <property type="term" value="P:'de novo' IMP biosynthetic process"/>
    <property type="evidence" value="ECO:0007669"/>
    <property type="project" value="UniProtKB-UniRule"/>
</dbReference>
<dbReference type="CDD" id="cd01414">
    <property type="entry name" value="SAICAR_synt_Sc"/>
    <property type="match status" value="1"/>
</dbReference>
<dbReference type="Gene3D" id="3.30.470.20">
    <property type="entry name" value="ATP-grasp fold, B domain"/>
    <property type="match status" value="1"/>
</dbReference>
<dbReference type="Gene3D" id="3.30.200.20">
    <property type="entry name" value="Phosphorylase Kinase, domain 1"/>
    <property type="match status" value="1"/>
</dbReference>
<dbReference type="HAMAP" id="MF_00137">
    <property type="entry name" value="SAICAR_synth"/>
    <property type="match status" value="1"/>
</dbReference>
<dbReference type="InterPro" id="IPR028923">
    <property type="entry name" value="SAICAR_synt/ADE2_N"/>
</dbReference>
<dbReference type="InterPro" id="IPR014106">
    <property type="entry name" value="SAICAR_synthase_Vibrio-typ"/>
</dbReference>
<dbReference type="NCBIfam" id="NF010567">
    <property type="entry name" value="PRK13960.1"/>
    <property type="match status" value="1"/>
</dbReference>
<dbReference type="NCBIfam" id="TIGR02735">
    <property type="entry name" value="purC_vibrio"/>
    <property type="match status" value="1"/>
</dbReference>
<dbReference type="PANTHER" id="PTHR43700">
    <property type="entry name" value="PHOSPHORIBOSYLAMINOIMIDAZOLE-SUCCINOCARBOXAMIDE SYNTHASE"/>
    <property type="match status" value="1"/>
</dbReference>
<dbReference type="PANTHER" id="PTHR43700:SF1">
    <property type="entry name" value="PHOSPHORIBOSYLAMINOIMIDAZOLE-SUCCINOCARBOXAMIDE SYNTHASE"/>
    <property type="match status" value="1"/>
</dbReference>
<dbReference type="Pfam" id="PF01259">
    <property type="entry name" value="SAICAR_synt"/>
    <property type="match status" value="1"/>
</dbReference>
<dbReference type="SUPFAM" id="SSF56104">
    <property type="entry name" value="SAICAR synthase-like"/>
    <property type="match status" value="1"/>
</dbReference>
<organism>
    <name type="scientific">Aliivibrio fischeri (strain ATCC 700601 / ES114)</name>
    <name type="common">Vibrio fischeri</name>
    <dbReference type="NCBI Taxonomy" id="312309"/>
    <lineage>
        <taxon>Bacteria</taxon>
        <taxon>Pseudomonadati</taxon>
        <taxon>Pseudomonadota</taxon>
        <taxon>Gammaproteobacteria</taxon>
        <taxon>Vibrionales</taxon>
        <taxon>Vibrionaceae</taxon>
        <taxon>Aliivibrio</taxon>
    </lineage>
</organism>
<comment type="catalytic activity">
    <reaction evidence="1">
        <text>5-amino-1-(5-phospho-D-ribosyl)imidazole-4-carboxylate + L-aspartate + ATP = (2S)-2-[5-amino-1-(5-phospho-beta-D-ribosyl)imidazole-4-carboxamido]succinate + ADP + phosphate + 2 H(+)</text>
        <dbReference type="Rhea" id="RHEA:22628"/>
        <dbReference type="ChEBI" id="CHEBI:15378"/>
        <dbReference type="ChEBI" id="CHEBI:29991"/>
        <dbReference type="ChEBI" id="CHEBI:30616"/>
        <dbReference type="ChEBI" id="CHEBI:43474"/>
        <dbReference type="ChEBI" id="CHEBI:58443"/>
        <dbReference type="ChEBI" id="CHEBI:77657"/>
        <dbReference type="ChEBI" id="CHEBI:456216"/>
        <dbReference type="EC" id="6.3.2.6"/>
    </reaction>
</comment>
<comment type="pathway">
    <text evidence="1">Purine metabolism; IMP biosynthesis via de novo pathway; 5-amino-1-(5-phospho-D-ribosyl)imidazole-4-carboxamide from 5-amino-1-(5-phospho-D-ribosyl)imidazole-4-carboxylate: step 1/2.</text>
</comment>
<comment type="similarity">
    <text evidence="1">Belongs to the SAICAR synthetase family.</text>
</comment>
<reference key="1">
    <citation type="journal article" date="2005" name="Proc. Natl. Acad. Sci. U.S.A.">
        <title>Complete genome sequence of Vibrio fischeri: a symbiotic bacterium with pathogenic congeners.</title>
        <authorList>
            <person name="Ruby E.G."/>
            <person name="Urbanowski M."/>
            <person name="Campbell J."/>
            <person name="Dunn A."/>
            <person name="Faini M."/>
            <person name="Gunsalus R."/>
            <person name="Lostroh P."/>
            <person name="Lupp C."/>
            <person name="McCann J."/>
            <person name="Millikan D."/>
            <person name="Schaefer A."/>
            <person name="Stabb E."/>
            <person name="Stevens A."/>
            <person name="Visick K."/>
            <person name="Whistler C."/>
            <person name="Greenberg E.P."/>
        </authorList>
    </citation>
    <scope>NUCLEOTIDE SEQUENCE [LARGE SCALE GENOMIC DNA]</scope>
    <source>
        <strain>ATCC 700601 / ES114</strain>
    </source>
</reference>
<protein>
    <recommendedName>
        <fullName evidence="1">Phosphoribosylaminoimidazole-succinocarboxamide synthase</fullName>
        <ecNumber evidence="1">6.3.2.6</ecNumber>
    </recommendedName>
    <alternativeName>
        <fullName evidence="1">SAICAR synthetase</fullName>
    </alternativeName>
</protein>
<name>PUR7_ALIF1</name>
<accession>Q5E4Q3</accession>
<keyword id="KW-0067">ATP-binding</keyword>
<keyword id="KW-0436">Ligase</keyword>
<keyword id="KW-0547">Nucleotide-binding</keyword>
<keyword id="KW-0658">Purine biosynthesis</keyword>
<keyword id="KW-1185">Reference proteome</keyword>
<feature type="chain" id="PRO_1000117860" description="Phosphoribosylaminoimidazole-succinocarboxamide synthase">
    <location>
        <begin position="1"/>
        <end position="367"/>
    </location>
</feature>